<reference evidence="16" key="1">
    <citation type="journal article" date="2001" name="Oncogene">
        <title>WNK kinases, a novel protein kinase subfamily in multi-cellular organisms.</title>
        <authorList>
            <person name="Verissimo F."/>
            <person name="Jordan P."/>
        </authorList>
    </citation>
    <scope>NUCLEOTIDE SEQUENCE [MRNA] (ISOFORM 1)</scope>
    <scope>TISSUE SPECIFICITY</scope>
    <scope>CHROMOSOMAL LOCATION</scope>
    <source>
        <tissue evidence="7">Colon epithelium</tissue>
    </source>
</reference>
<reference evidence="16" key="2">
    <citation type="submission" date="2005-01" db="EMBL/GenBank/DDBJ databases">
        <authorList>
            <person name="Jordan P."/>
        </authorList>
    </citation>
    <scope>SEQUENCE REVISION</scope>
</reference>
<reference key="3">
    <citation type="journal article" date="2004" name="Nature">
        <title>DNA sequence and analysis of human chromosome 9.</title>
        <authorList>
            <person name="Humphray S.J."/>
            <person name="Oliver K."/>
            <person name="Hunt A.R."/>
            <person name="Plumb R.W."/>
            <person name="Loveland J.E."/>
            <person name="Howe K.L."/>
            <person name="Andrews T.D."/>
            <person name="Searle S."/>
            <person name="Hunt S.E."/>
            <person name="Scott C.E."/>
            <person name="Jones M.C."/>
            <person name="Ainscough R."/>
            <person name="Almeida J.P."/>
            <person name="Ambrose K.D."/>
            <person name="Ashwell R.I.S."/>
            <person name="Babbage A.K."/>
            <person name="Babbage S."/>
            <person name="Bagguley C.L."/>
            <person name="Bailey J."/>
            <person name="Banerjee R."/>
            <person name="Barker D.J."/>
            <person name="Barlow K.F."/>
            <person name="Bates K."/>
            <person name="Beasley H."/>
            <person name="Beasley O."/>
            <person name="Bird C.P."/>
            <person name="Bray-Allen S."/>
            <person name="Brown A.J."/>
            <person name="Brown J.Y."/>
            <person name="Burford D."/>
            <person name="Burrill W."/>
            <person name="Burton J."/>
            <person name="Carder C."/>
            <person name="Carter N.P."/>
            <person name="Chapman J.C."/>
            <person name="Chen Y."/>
            <person name="Clarke G."/>
            <person name="Clark S.Y."/>
            <person name="Clee C.M."/>
            <person name="Clegg S."/>
            <person name="Collier R.E."/>
            <person name="Corby N."/>
            <person name="Crosier M."/>
            <person name="Cummings A.T."/>
            <person name="Davies J."/>
            <person name="Dhami P."/>
            <person name="Dunn M."/>
            <person name="Dutta I."/>
            <person name="Dyer L.W."/>
            <person name="Earthrowl M.E."/>
            <person name="Faulkner L."/>
            <person name="Fleming C.J."/>
            <person name="Frankish A."/>
            <person name="Frankland J.A."/>
            <person name="French L."/>
            <person name="Fricker D.G."/>
            <person name="Garner P."/>
            <person name="Garnett J."/>
            <person name="Ghori J."/>
            <person name="Gilbert J.G.R."/>
            <person name="Glison C."/>
            <person name="Grafham D.V."/>
            <person name="Gribble S."/>
            <person name="Griffiths C."/>
            <person name="Griffiths-Jones S."/>
            <person name="Grocock R."/>
            <person name="Guy J."/>
            <person name="Hall R.E."/>
            <person name="Hammond S."/>
            <person name="Harley J.L."/>
            <person name="Harrison E.S.I."/>
            <person name="Hart E.A."/>
            <person name="Heath P.D."/>
            <person name="Henderson C.D."/>
            <person name="Hopkins B.L."/>
            <person name="Howard P.J."/>
            <person name="Howden P.J."/>
            <person name="Huckle E."/>
            <person name="Johnson C."/>
            <person name="Johnson D."/>
            <person name="Joy A.A."/>
            <person name="Kay M."/>
            <person name="Keenan S."/>
            <person name="Kershaw J.K."/>
            <person name="Kimberley A.M."/>
            <person name="King A."/>
            <person name="Knights A."/>
            <person name="Laird G.K."/>
            <person name="Langford C."/>
            <person name="Lawlor S."/>
            <person name="Leongamornlert D.A."/>
            <person name="Leversha M."/>
            <person name="Lloyd C."/>
            <person name="Lloyd D.M."/>
            <person name="Lovell J."/>
            <person name="Martin S."/>
            <person name="Mashreghi-Mohammadi M."/>
            <person name="Matthews L."/>
            <person name="McLaren S."/>
            <person name="McLay K.E."/>
            <person name="McMurray A."/>
            <person name="Milne S."/>
            <person name="Nickerson T."/>
            <person name="Nisbett J."/>
            <person name="Nordsiek G."/>
            <person name="Pearce A.V."/>
            <person name="Peck A.I."/>
            <person name="Porter K.M."/>
            <person name="Pandian R."/>
            <person name="Pelan S."/>
            <person name="Phillimore B."/>
            <person name="Povey S."/>
            <person name="Ramsey Y."/>
            <person name="Rand V."/>
            <person name="Scharfe M."/>
            <person name="Sehra H.K."/>
            <person name="Shownkeen R."/>
            <person name="Sims S.K."/>
            <person name="Skuce C.D."/>
            <person name="Smith M."/>
            <person name="Steward C.A."/>
            <person name="Swarbreck D."/>
            <person name="Sycamore N."/>
            <person name="Tester J."/>
            <person name="Thorpe A."/>
            <person name="Tracey A."/>
            <person name="Tromans A."/>
            <person name="Thomas D.W."/>
            <person name="Wall M."/>
            <person name="Wallis J.M."/>
            <person name="West A.P."/>
            <person name="Whitehead S.L."/>
            <person name="Willey D.L."/>
            <person name="Williams S.A."/>
            <person name="Wilming L."/>
            <person name="Wray P.W."/>
            <person name="Young L."/>
            <person name="Ashurst J.L."/>
            <person name="Coulson A."/>
            <person name="Blocker H."/>
            <person name="Durbin R.M."/>
            <person name="Sulston J.E."/>
            <person name="Hubbard T."/>
            <person name="Jackson M.J."/>
            <person name="Bentley D.R."/>
            <person name="Beck S."/>
            <person name="Rogers J."/>
            <person name="Dunham I."/>
        </authorList>
    </citation>
    <scope>NUCLEOTIDE SEQUENCE [LARGE SCALE GENOMIC DNA]</scope>
</reference>
<reference evidence="16" key="4">
    <citation type="journal article" date="2001" name="Cancer Res.">
        <title>Molecular basis of T cell-mediated recognition of pancreatic cancer cells.</title>
        <authorList>
            <person name="Ito M."/>
            <person name="Shichijo S."/>
            <person name="Tsuda N."/>
            <person name="Ochi M."/>
            <person name="Harashima N."/>
            <person name="Saito N."/>
            <person name="Itoh K."/>
        </authorList>
    </citation>
    <scope>NUCLEOTIDE SEQUENCE [MRNA] OF 1-845 (ISOFORM 3)</scope>
    <source>
        <tissue evidence="6">Pancreatic cancer</tissue>
    </source>
</reference>
<reference evidence="16" key="5">
    <citation type="journal article" date="2000" name="DNA Res.">
        <title>Prediction of the coding sequences of unidentified human genes. XIX. The complete sequences of 100 new cDNA clones from brain which code for large proteins in vitro.</title>
        <authorList>
            <person name="Nagase T."/>
            <person name="Kikuno R."/>
            <person name="Hattori A."/>
            <person name="Kondo Y."/>
            <person name="Okumura K."/>
            <person name="Ohara O."/>
        </authorList>
    </citation>
    <scope>NUCLEOTIDE SEQUENCE [LARGE SCALE MRNA] OF 6-2297 (ISOFORM 2)</scope>
    <source>
        <tissue evidence="17">Brain</tissue>
    </source>
</reference>
<reference evidence="16" key="6">
    <citation type="submission" date="2000-11" db="EMBL/GenBank/DDBJ databases">
        <authorList>
            <person name="Ohara O."/>
            <person name="Nagase T."/>
            <person name="Kikuno R."/>
        </authorList>
    </citation>
    <scope>SEQUENCE REVISION</scope>
</reference>
<reference evidence="16" key="7">
    <citation type="journal article" date="2004" name="Genome Res.">
        <title>The status, quality, and expansion of the NIH full-length cDNA project: the Mammalian Gene Collection (MGC).</title>
        <authorList>
            <consortium name="The MGC Project Team"/>
        </authorList>
    </citation>
    <scope>NUCLEOTIDE SEQUENCE [LARGE SCALE MRNA] OF 1609-2297 (ISOFORM 4)</scope>
    <source>
        <tissue evidence="8">Lung</tissue>
    </source>
</reference>
<reference key="8">
    <citation type="journal article" date="2007" name="Oncogene">
        <title>Protein kinase WNK2 inhibits cell proliferation by negatively modulating the activation of MEK1/ERK1/2.</title>
        <authorList>
            <person name="Moniz S."/>
            <person name="Verissimo F."/>
            <person name="Matos P."/>
            <person name="Brazao R."/>
            <person name="Silva E."/>
            <person name="Kotelevets L."/>
            <person name="Kotevelets L."/>
            <person name="Chastre E."/>
            <person name="Gespach C."/>
            <person name="Jordan P."/>
        </authorList>
    </citation>
    <scope>FUNCTION</scope>
    <scope>SUBCELLULAR LOCATION</scope>
    <scope>TISSUE SPECIFICITY</scope>
    <scope>AUTOPHOSPHORYLATION</scope>
</reference>
<reference key="9">
    <citation type="journal article" date="2008" name="Oncogene">
        <authorList>
            <person name="Moniz S."/>
            <person name="Verissimo F."/>
            <person name="Matos P."/>
            <person name="Brazao R."/>
            <person name="Silva E."/>
            <person name="Kotelevets L."/>
            <person name="Kotevelets L."/>
            <person name="Chastre E."/>
            <person name="Gespach C."/>
            <person name="Jordan P."/>
        </authorList>
    </citation>
    <scope>ERRATUM OF PUBMED:17667937</scope>
</reference>
<reference key="10">
    <citation type="journal article" date="2008" name="Cell. Signal.">
        <title>WNK2 modulates MEK1 activity through the Rho GTPase pathway.</title>
        <authorList>
            <person name="Moniz S."/>
            <person name="Matos P."/>
            <person name="Jordan P."/>
        </authorList>
    </citation>
    <scope>FUNCTION</scope>
    <scope>SUBCELLULAR LOCATION</scope>
    <scope>PHOSPHORYLATION</scope>
</reference>
<reference key="11">
    <citation type="journal article" date="2008" name="Proc. Natl. Acad. Sci. U.S.A.">
        <title>A quantitative atlas of mitotic phosphorylation.</title>
        <authorList>
            <person name="Dephoure N."/>
            <person name="Zhou C."/>
            <person name="Villen J."/>
            <person name="Beausoleil S.A."/>
            <person name="Bakalarski C.E."/>
            <person name="Elledge S.J."/>
            <person name="Gygi S.P."/>
        </authorList>
    </citation>
    <scope>PHOSPHORYLATION [LARGE SCALE ANALYSIS] AT SER-1817 AND SER-1818</scope>
    <scope>IDENTIFICATION BY MASS SPECTROMETRY [LARGE SCALE ANALYSIS]</scope>
    <source>
        <tissue>Cervix carcinoma</tissue>
    </source>
</reference>
<reference key="12">
    <citation type="journal article" date="2009" name="Anal. Chem.">
        <title>Lys-N and trypsin cover complementary parts of the phosphoproteome in a refined SCX-based approach.</title>
        <authorList>
            <person name="Gauci S."/>
            <person name="Helbig A.O."/>
            <person name="Slijper M."/>
            <person name="Krijgsveld J."/>
            <person name="Heck A.J."/>
            <person name="Mohammed S."/>
        </authorList>
    </citation>
    <scope>IDENTIFICATION BY MASS SPECTROMETRY [LARGE SCALE ANALYSIS]</scope>
</reference>
<reference key="13">
    <citation type="journal article" date="2009" name="Sci. Signal.">
        <title>Quantitative phosphoproteomic analysis of T cell receptor signaling reveals system-wide modulation of protein-protein interactions.</title>
        <authorList>
            <person name="Mayya V."/>
            <person name="Lundgren D.H."/>
            <person name="Hwang S.-I."/>
            <person name="Rezaul K."/>
            <person name="Wu L."/>
            <person name="Eng J.K."/>
            <person name="Rodionov V."/>
            <person name="Han D.K."/>
        </authorList>
    </citation>
    <scope>PHOSPHORYLATION [LARGE SCALE ANALYSIS] AT SER-1817 AND SER-1818</scope>
    <scope>IDENTIFICATION BY MASS SPECTROMETRY [LARGE SCALE ANALYSIS]</scope>
    <source>
        <tissue>Leukemic T-cell</tissue>
    </source>
</reference>
<reference key="14">
    <citation type="journal article" date="2011" name="J. Biol. Chem.">
        <title>WNK2 is a novel regulator of essential neuronal cation-chloride cotransporters.</title>
        <authorList>
            <person name="Rinehart J."/>
            <person name="Vazquez N."/>
            <person name="Kahle K.T."/>
            <person name="Hodson C.A."/>
            <person name="Ring A.M."/>
            <person name="Gulcicek E.E."/>
            <person name="Louvi A."/>
            <person name="Bobadilla N.A."/>
            <person name="Gamba G."/>
            <person name="Lifton R.P."/>
        </authorList>
    </citation>
    <scope>FUNCTION</scope>
    <scope>TISSUE SPECIFICITY</scope>
    <scope>PHOSPHORYLATION AT SER-45; SER-560; SER-1150; SER-1262; SER-1588; SER-1685; SER-1736; SER-1817; SER-1818; SER-1862 AND SER-2067</scope>
</reference>
<protein>
    <recommendedName>
        <fullName evidence="16">Serine/threonine-protein kinase WNK2</fullName>
        <ecNumber evidence="2">2.7.11.1</ecNumber>
    </recommendedName>
    <alternativeName>
        <fullName>Antigen NY-CO-43</fullName>
    </alternativeName>
    <alternativeName>
        <fullName evidence="18">Protein kinase lysine-deficient 2</fullName>
    </alternativeName>
    <alternativeName>
        <fullName evidence="14">Protein kinase with no lysine 2</fullName>
    </alternativeName>
    <alternativeName>
        <fullName>Serologically defined colon cancer antigen 43</fullName>
    </alternativeName>
</protein>
<proteinExistence type="evidence at protein level"/>
<keyword id="KW-0002">3D-structure</keyword>
<keyword id="KW-0025">Alternative splicing</keyword>
<keyword id="KW-0067">ATP-binding</keyword>
<keyword id="KW-1003">Cell membrane</keyword>
<keyword id="KW-0963">Cytoplasm</keyword>
<keyword id="KW-0418">Kinase</keyword>
<keyword id="KW-0472">Membrane</keyword>
<keyword id="KW-0488">Methylation</keyword>
<keyword id="KW-0547">Nucleotide-binding</keyword>
<keyword id="KW-0597">Phosphoprotein</keyword>
<keyword id="KW-1267">Proteomics identification</keyword>
<keyword id="KW-1185">Reference proteome</keyword>
<keyword id="KW-0723">Serine/threonine-protein kinase</keyword>
<keyword id="KW-0808">Transferase</keyword>
<gene>
    <name evidence="14 18" type="primary">WNK2</name>
    <name evidence="17" type="synonym">KIAA1760</name>
    <name evidence="18" type="synonym">PRKWNK2</name>
    <name evidence="18" type="synonym">SDCCAG43</name>
    <name type="ORF">P/OKcl.13</name>
</gene>
<organism>
    <name type="scientific">Homo sapiens</name>
    <name type="common">Human</name>
    <dbReference type="NCBI Taxonomy" id="9606"/>
    <lineage>
        <taxon>Eukaryota</taxon>
        <taxon>Metazoa</taxon>
        <taxon>Chordata</taxon>
        <taxon>Craniata</taxon>
        <taxon>Vertebrata</taxon>
        <taxon>Euteleostomi</taxon>
        <taxon>Mammalia</taxon>
        <taxon>Eutheria</taxon>
        <taxon>Euarchontoglires</taxon>
        <taxon>Primates</taxon>
        <taxon>Haplorrhini</taxon>
        <taxon>Catarrhini</taxon>
        <taxon>Hominidae</taxon>
        <taxon>Homo</taxon>
    </lineage>
</organism>
<comment type="function">
    <text evidence="2 9 10 11">Serine/threonine-protein kinase component of the WNK2-SPAK/OSR1 kinase cascade, which plays an important role in the regulation of electrolyte homeostasis, cell signaling, survival, and proliferation (PubMed:17667937, PubMed:18593598, PubMed:21733846). The WNK2-SPAK/OSR1 kinase cascade is composed of WNK2, which mediates phosphorylation and activation of downstream kinases OXSR1/OSR1 and STK39/SPAK (By similarity). Following activation, OXSR1/OSR1 and STK39/SPAK catalyze phosphorylation of ion cotransporters, regulating their activity (By similarity). Acts as an activator and inhibitor of sodium-coupled chloride cotransporters and potassium-coupled chloride cotransporters respectively (PubMed:21733846). Activates SLC12A2, SCNN1A, SCNN1B, SCNN1D and SGK1 and inhibits SLC12A5 (PubMed:21733846). Negatively regulates the EGF-induced activation of the ERK/MAPK-pathway and the downstream cell cycle progression (PubMed:17667937, PubMed:18593598). Affects MAPK3/MAPK1 activity by modulating the activity of MAP2K1 and this modulation depends on phosphorylation of MAP2K1 by PAK1 (PubMed:17667937, PubMed:18593598). WNK2 acts by interfering with the activity of PAK1 by controlling the balance of the activity of upstream regulators of PAK1 activity, RHOA and RAC1, which display reciprocal activity (PubMed:17667937, PubMed:18593598).</text>
</comment>
<comment type="catalytic activity">
    <reaction evidence="2">
        <text>L-seryl-[protein] + ATP = O-phospho-L-seryl-[protein] + ADP + H(+)</text>
        <dbReference type="Rhea" id="RHEA:17989"/>
        <dbReference type="Rhea" id="RHEA-COMP:9863"/>
        <dbReference type="Rhea" id="RHEA-COMP:11604"/>
        <dbReference type="ChEBI" id="CHEBI:15378"/>
        <dbReference type="ChEBI" id="CHEBI:29999"/>
        <dbReference type="ChEBI" id="CHEBI:30616"/>
        <dbReference type="ChEBI" id="CHEBI:83421"/>
        <dbReference type="ChEBI" id="CHEBI:456216"/>
        <dbReference type="EC" id="2.7.11.1"/>
    </reaction>
</comment>
<comment type="catalytic activity">
    <reaction evidence="2">
        <text>L-threonyl-[protein] + ATP = O-phospho-L-threonyl-[protein] + ADP + H(+)</text>
        <dbReference type="Rhea" id="RHEA:46608"/>
        <dbReference type="Rhea" id="RHEA-COMP:11060"/>
        <dbReference type="Rhea" id="RHEA-COMP:11605"/>
        <dbReference type="ChEBI" id="CHEBI:15378"/>
        <dbReference type="ChEBI" id="CHEBI:30013"/>
        <dbReference type="ChEBI" id="CHEBI:30616"/>
        <dbReference type="ChEBI" id="CHEBI:61977"/>
        <dbReference type="ChEBI" id="CHEBI:456216"/>
        <dbReference type="EC" id="2.7.11.1"/>
    </reaction>
</comment>
<comment type="cofactor">
    <cofactor evidence="2">
        <name>Mg(2+)</name>
        <dbReference type="ChEBI" id="CHEBI:18420"/>
    </cofactor>
</comment>
<comment type="activity regulation">
    <text evidence="3">Activation requires autophosphorylation of Ser-356 and, to a lower extent, Ser-352 (By similarity).</text>
</comment>
<comment type="subunit">
    <text evidence="1">Forms a complex with the phosphorylated form of STK39.</text>
</comment>
<comment type="interaction">
    <interactant intactId="EBI-948521">
        <id>Q9Y3S1</id>
    </interactant>
    <interactant intactId="EBI-620853">
        <id>O95747</id>
        <label>OXSR1</label>
    </interactant>
    <organismsDiffer>false</organismsDiffer>
    <experiments>2</experiments>
</comment>
<comment type="subcellular location">
    <subcellularLocation>
        <location evidence="9 10">Cytoplasm</location>
    </subcellularLocation>
    <subcellularLocation>
        <location evidence="10">Cell membrane</location>
    </subcellularLocation>
</comment>
<comment type="alternative products">
    <event type="alternative splicing"/>
    <isoform>
        <id>Q9Y3S1-1</id>
        <name evidence="7">1</name>
        <sequence type="displayed"/>
    </isoform>
    <isoform>
        <id>Q9Y3S1-2</id>
        <name evidence="12">2</name>
        <sequence type="described" ref="VSP_050643 VSP_050644 VSP_050647"/>
    </isoform>
    <isoform>
        <id>Q9Y3S1-3</id>
        <name evidence="6">3</name>
        <sequence type="described" ref="VSP_050639 VSP_050640 VSP_050641 VSP_050642"/>
    </isoform>
    <isoform>
        <id>Q9Y3S1-4</id>
        <name evidence="15">4</name>
        <sequence type="described" ref="VSP_050645 VSP_050646"/>
    </isoform>
</comment>
<comment type="tissue specificity">
    <text evidence="7 9 11">Expressed in various cancer cell lines (at protein level). Predominantly expressed in heart, brain, skeletal muscle and colon.</text>
</comment>
<comment type="PTM">
    <text evidence="3 10 11">Autophosphorylated (PubMed:18593598, PubMed:21733846). Autophosphorylation at Ser-352 and Ser-356 promotes its activity (By similarity).</text>
</comment>
<comment type="miscellaneous">
    <molecule>Isoform 3</molecule>
    <text evidence="6">Incomplete sequence.</text>
</comment>
<comment type="similarity">
    <text evidence="4">Belongs to the protein kinase superfamily. Ser/Thr protein kinase family. WNK subfamily.</text>
</comment>
<comment type="caution">
    <text evidence="2">Was named WNK/'with no lysine(K)' because key residues for catalysis, including the lysine involved in ATP binding, are either not conserved or differ compared to the residues described in other kinase family proteins.</text>
</comment>
<comment type="sequence caution" evidence="16">
    <conflict type="erroneous initiation">
        <sequence resource="EMBL-CDS" id="AAH37965"/>
    </conflict>
    <text>Extended N-terminus.</text>
</comment>
<comment type="online information" name="Atlas of Genetics and Cytogenetics in Oncology and Haematology">
    <link uri="https://atlasgeneticsoncology.org/gene/41867/WNK2"/>
</comment>
<name>WNK2_HUMAN</name>
<accession>Q9Y3S1</accession>
<accession>Q5VWF1</accession>
<accession>Q5VWF2</accession>
<accession>Q8IY36</accession>
<accession>Q9C0A3</accession>
<accession>Q9H3P4</accession>
<dbReference type="EC" id="2.7.11.1" evidence="2"/>
<dbReference type="EMBL" id="AJ242724">
    <property type="protein sequence ID" value="CAB44308.5"/>
    <property type="molecule type" value="mRNA"/>
</dbReference>
<dbReference type="EMBL" id="AL354991">
    <property type="status" value="NOT_ANNOTATED_CDS"/>
    <property type="molecule type" value="Genomic_DNA"/>
</dbReference>
<dbReference type="EMBL" id="AL390760">
    <property type="status" value="NOT_ANNOTATED_CDS"/>
    <property type="molecule type" value="Genomic_DNA"/>
</dbReference>
<dbReference type="EMBL" id="AL583839">
    <property type="status" value="NOT_ANNOTATED_CDS"/>
    <property type="molecule type" value="Genomic_DNA"/>
</dbReference>
<dbReference type="EMBL" id="AB044546">
    <property type="protein sequence ID" value="BAB18648.1"/>
    <property type="molecule type" value="mRNA"/>
</dbReference>
<dbReference type="EMBL" id="AB051547">
    <property type="protein sequence ID" value="BAB21851.2"/>
    <property type="molecule type" value="mRNA"/>
</dbReference>
<dbReference type="EMBL" id="BC037965">
    <property type="protein sequence ID" value="AAH37965.1"/>
    <property type="status" value="ALT_INIT"/>
    <property type="molecule type" value="mRNA"/>
</dbReference>
<dbReference type="CCDS" id="CCDS75858.1">
    <molecule id="Q9Y3S1-1"/>
</dbReference>
<dbReference type="RefSeq" id="NP_001269323.1">
    <molecule id="Q9Y3S1-1"/>
    <property type="nucleotide sequence ID" value="NM_001282394.3"/>
</dbReference>
<dbReference type="RefSeq" id="XP_005252197.1">
    <molecule id="Q9Y3S1-2"/>
    <property type="nucleotide sequence ID" value="XM_005252140.3"/>
</dbReference>
<dbReference type="RefSeq" id="XP_054219554.1">
    <molecule id="Q9Y3S1-2"/>
    <property type="nucleotide sequence ID" value="XM_054363579.1"/>
</dbReference>
<dbReference type="PDB" id="6ELM">
    <property type="method" value="X-ray"/>
    <property type="resolution" value="1.14 A"/>
    <property type="chains" value="A=454-549"/>
</dbReference>
<dbReference type="PDB" id="6FBK">
    <property type="method" value="X-ray"/>
    <property type="resolution" value="1.74 A"/>
    <property type="chains" value="A=454-549"/>
</dbReference>
<dbReference type="PDBsum" id="6ELM"/>
<dbReference type="PDBsum" id="6FBK"/>
<dbReference type="SMR" id="Q9Y3S1"/>
<dbReference type="BioGRID" id="122423">
    <property type="interactions" value="41"/>
</dbReference>
<dbReference type="ELM" id="Q9Y3S1"/>
<dbReference type="FunCoup" id="Q9Y3S1">
    <property type="interactions" value="934"/>
</dbReference>
<dbReference type="IntAct" id="Q9Y3S1">
    <property type="interactions" value="23"/>
</dbReference>
<dbReference type="STRING" id="9606.ENSP00000297954"/>
<dbReference type="BindingDB" id="Q9Y3S1"/>
<dbReference type="ChEMBL" id="CHEMBL5639"/>
<dbReference type="GuidetoPHARMACOLOGY" id="2281"/>
<dbReference type="GlyCosmos" id="Q9Y3S1">
    <property type="glycosylation" value="2 sites, 1 glycan"/>
</dbReference>
<dbReference type="GlyGen" id="Q9Y3S1">
    <property type="glycosylation" value="8 sites, 1 O-linked glycan (5 sites)"/>
</dbReference>
<dbReference type="iPTMnet" id="Q9Y3S1"/>
<dbReference type="PhosphoSitePlus" id="Q9Y3S1"/>
<dbReference type="BioMuta" id="WNK2"/>
<dbReference type="DMDM" id="41688799"/>
<dbReference type="jPOST" id="Q9Y3S1"/>
<dbReference type="MassIVE" id="Q9Y3S1"/>
<dbReference type="PaxDb" id="9606-ENSP00000297954"/>
<dbReference type="PeptideAtlas" id="Q9Y3S1"/>
<dbReference type="ProteomicsDB" id="86071">
    <molecule id="Q9Y3S1-1"/>
</dbReference>
<dbReference type="ProteomicsDB" id="86072">
    <molecule id="Q9Y3S1-2"/>
</dbReference>
<dbReference type="ProteomicsDB" id="86073">
    <molecule id="Q9Y3S1-3"/>
</dbReference>
<dbReference type="ProteomicsDB" id="86074">
    <molecule id="Q9Y3S1-4"/>
</dbReference>
<dbReference type="Pumba" id="Q9Y3S1"/>
<dbReference type="Antibodypedia" id="28371">
    <property type="antibodies" value="173 antibodies from 26 providers"/>
</dbReference>
<dbReference type="DNASU" id="65268"/>
<dbReference type="Ensembl" id="ENST00000297954.9">
    <molecule id="Q9Y3S1-1"/>
    <property type="protein sequence ID" value="ENSP00000297954.4"/>
    <property type="gene ID" value="ENSG00000165238.17"/>
</dbReference>
<dbReference type="Ensembl" id="ENST00000432730.6">
    <molecule id="Q9Y3S1-2"/>
    <property type="protein sequence ID" value="ENSP00000415038.2"/>
    <property type="gene ID" value="ENSG00000165238.17"/>
</dbReference>
<dbReference type="GeneID" id="65268"/>
<dbReference type="KEGG" id="hsa:65268"/>
<dbReference type="UCSC" id="uc004ati.3">
    <molecule id="Q9Y3S1-1"/>
    <property type="organism name" value="human"/>
</dbReference>
<dbReference type="AGR" id="HGNC:14542"/>
<dbReference type="CTD" id="65268"/>
<dbReference type="DisGeNET" id="65268"/>
<dbReference type="GeneCards" id="WNK2"/>
<dbReference type="HGNC" id="HGNC:14542">
    <property type="gene designation" value="WNK2"/>
</dbReference>
<dbReference type="HPA" id="ENSG00000165238">
    <property type="expression patterns" value="Tissue enhanced (heart muscle, skeletal muscle)"/>
</dbReference>
<dbReference type="MalaCards" id="WNK2"/>
<dbReference type="MIM" id="606249">
    <property type="type" value="gene"/>
</dbReference>
<dbReference type="neXtProt" id="NX_Q9Y3S1"/>
<dbReference type="OpenTargets" id="ENSG00000165238"/>
<dbReference type="PharmGKB" id="PA33783"/>
<dbReference type="VEuPathDB" id="HostDB:ENSG00000165238"/>
<dbReference type="eggNOG" id="KOG0584">
    <property type="taxonomic scope" value="Eukaryota"/>
</dbReference>
<dbReference type="GeneTree" id="ENSGT00940000157161"/>
<dbReference type="InParanoid" id="Q9Y3S1"/>
<dbReference type="OMA" id="CRNRYSA"/>
<dbReference type="OrthoDB" id="4062651at2759"/>
<dbReference type="PAN-GO" id="Q9Y3S1">
    <property type="GO annotations" value="11 GO annotations based on evolutionary models"/>
</dbReference>
<dbReference type="PhylomeDB" id="Q9Y3S1"/>
<dbReference type="TreeFam" id="TF315363"/>
<dbReference type="PathwayCommons" id="Q9Y3S1"/>
<dbReference type="Reactome" id="R-HSA-2672351">
    <property type="pathway name" value="Stimuli-sensing channels"/>
</dbReference>
<dbReference type="SignaLink" id="Q9Y3S1"/>
<dbReference type="SIGNOR" id="Q9Y3S1"/>
<dbReference type="BioGRID-ORCS" id="65268">
    <property type="hits" value="9 hits in 353 CRISPR screens"/>
</dbReference>
<dbReference type="ChiTaRS" id="WNK2">
    <property type="organism name" value="human"/>
</dbReference>
<dbReference type="GeneWiki" id="WNK2"/>
<dbReference type="GenomeRNAi" id="65268"/>
<dbReference type="Pharos" id="Q9Y3S1">
    <property type="development level" value="Tchem"/>
</dbReference>
<dbReference type="PRO" id="PR:Q9Y3S1"/>
<dbReference type="Proteomes" id="UP000005640">
    <property type="component" value="Chromosome 9"/>
</dbReference>
<dbReference type="RNAct" id="Q9Y3S1">
    <property type="molecule type" value="protein"/>
</dbReference>
<dbReference type="Bgee" id="ENSG00000165238">
    <property type="expression patterns" value="Expressed in apex of heart and 161 other cell types or tissues"/>
</dbReference>
<dbReference type="ExpressionAtlas" id="Q9Y3S1">
    <property type="expression patterns" value="baseline and differential"/>
</dbReference>
<dbReference type="GO" id="GO:0005737">
    <property type="term" value="C:cytoplasm"/>
    <property type="evidence" value="ECO:0000314"/>
    <property type="project" value="UniProtKB"/>
</dbReference>
<dbReference type="GO" id="GO:0005829">
    <property type="term" value="C:cytosol"/>
    <property type="evidence" value="ECO:0000314"/>
    <property type="project" value="HPA"/>
</dbReference>
<dbReference type="GO" id="GO:0005886">
    <property type="term" value="C:plasma membrane"/>
    <property type="evidence" value="ECO:0007669"/>
    <property type="project" value="UniProtKB-SubCell"/>
</dbReference>
<dbReference type="GO" id="GO:0005524">
    <property type="term" value="F:ATP binding"/>
    <property type="evidence" value="ECO:0000250"/>
    <property type="project" value="UniProtKB"/>
</dbReference>
<dbReference type="GO" id="GO:0106310">
    <property type="term" value="F:protein serine kinase activity"/>
    <property type="evidence" value="ECO:0007669"/>
    <property type="project" value="RHEA"/>
</dbReference>
<dbReference type="GO" id="GO:0004674">
    <property type="term" value="F:protein serine/threonine kinase activity"/>
    <property type="evidence" value="ECO:0000250"/>
    <property type="project" value="UniProtKB"/>
</dbReference>
<dbReference type="GO" id="GO:0006974">
    <property type="term" value="P:DNA damage response"/>
    <property type="evidence" value="ECO:0000318"/>
    <property type="project" value="GO_Central"/>
</dbReference>
<dbReference type="GO" id="GO:0035556">
    <property type="term" value="P:intracellular signal transduction"/>
    <property type="evidence" value="ECO:0000250"/>
    <property type="project" value="UniProtKB"/>
</dbReference>
<dbReference type="GO" id="GO:0050801">
    <property type="term" value="P:monoatomic ion homeostasis"/>
    <property type="evidence" value="ECO:0000315"/>
    <property type="project" value="UniProtKB"/>
</dbReference>
<dbReference type="GO" id="GO:0008285">
    <property type="term" value="P:negative regulation of cell population proliferation"/>
    <property type="evidence" value="ECO:0000315"/>
    <property type="project" value="UniProtKB"/>
</dbReference>
<dbReference type="GO" id="GO:0070373">
    <property type="term" value="P:negative regulation of ERK1 and ERK2 cascade"/>
    <property type="evidence" value="ECO:0000315"/>
    <property type="project" value="UniProtKB"/>
</dbReference>
<dbReference type="GO" id="GO:0090263">
    <property type="term" value="P:positive regulation of canonical Wnt signaling pathway"/>
    <property type="evidence" value="ECO:0000315"/>
    <property type="project" value="FlyBase"/>
</dbReference>
<dbReference type="GO" id="GO:2000651">
    <property type="term" value="P:positive regulation of sodium ion transmembrane transporter activity"/>
    <property type="evidence" value="ECO:0000315"/>
    <property type="project" value="UniProtKB"/>
</dbReference>
<dbReference type="GO" id="GO:0046777">
    <property type="term" value="P:protein autophosphorylation"/>
    <property type="evidence" value="ECO:0000314"/>
    <property type="project" value="UniProtKB"/>
</dbReference>
<dbReference type="GO" id="GO:0006468">
    <property type="term" value="P:protein phosphorylation"/>
    <property type="evidence" value="ECO:0000314"/>
    <property type="project" value="UniProtKB"/>
</dbReference>
<dbReference type="CDD" id="cd14032">
    <property type="entry name" value="STKc_WNK2_like"/>
    <property type="match status" value="1"/>
</dbReference>
<dbReference type="FunFam" id="3.10.20.90:FF:000007">
    <property type="entry name" value="Serine/threonine-protein kinase WNK1 isoform 1"/>
    <property type="match status" value="1"/>
</dbReference>
<dbReference type="FunFam" id="1.10.510.10:FF:000006">
    <property type="entry name" value="Serine/threonine-protein kinase WNK1 isoform 2"/>
    <property type="match status" value="1"/>
</dbReference>
<dbReference type="FunFam" id="3.10.20.90:FF:000012">
    <property type="entry name" value="Serine/threonine-protein kinase WNK1 isoform 2"/>
    <property type="match status" value="1"/>
</dbReference>
<dbReference type="FunFam" id="3.30.200.20:FF:000494">
    <property type="entry name" value="serine/threonine-protein kinase WNK2 isoform X2"/>
    <property type="match status" value="1"/>
</dbReference>
<dbReference type="Gene3D" id="3.10.20.90">
    <property type="entry name" value="Phosphatidylinositol 3-kinase Catalytic Subunit, Chain A, domain 1"/>
    <property type="match status" value="2"/>
</dbReference>
<dbReference type="Gene3D" id="3.30.200.20">
    <property type="entry name" value="Phosphorylase Kinase, domain 1"/>
    <property type="match status" value="1"/>
</dbReference>
<dbReference type="Gene3D" id="1.10.510.10">
    <property type="entry name" value="Transferase(Phosphotransferase) domain 1"/>
    <property type="match status" value="1"/>
</dbReference>
<dbReference type="InterPro" id="IPR056865">
    <property type="entry name" value="CCTL2_WNK"/>
</dbReference>
<dbReference type="InterPro" id="IPR011009">
    <property type="entry name" value="Kinase-like_dom_sf"/>
</dbReference>
<dbReference type="InterPro" id="IPR024678">
    <property type="entry name" value="Kinase_OSR1/WNK_CCT"/>
</dbReference>
<dbReference type="InterPro" id="IPR000719">
    <property type="entry name" value="Prot_kinase_dom"/>
</dbReference>
<dbReference type="InterPro" id="IPR008271">
    <property type="entry name" value="Ser/Thr_kinase_AS"/>
</dbReference>
<dbReference type="InterPro" id="IPR050588">
    <property type="entry name" value="WNK_Ser-Thr_kinase"/>
</dbReference>
<dbReference type="PANTHER" id="PTHR13902">
    <property type="entry name" value="SERINE/THREONINE-PROTEIN KINASE WNK WITH NO LYSINE -RELATED"/>
    <property type="match status" value="1"/>
</dbReference>
<dbReference type="Pfam" id="PF24889">
    <property type="entry name" value="CCTL2_WNK"/>
    <property type="match status" value="1"/>
</dbReference>
<dbReference type="Pfam" id="PF12202">
    <property type="entry name" value="OSR1_C"/>
    <property type="match status" value="1"/>
</dbReference>
<dbReference type="Pfam" id="PF00069">
    <property type="entry name" value="Pkinase"/>
    <property type="match status" value="1"/>
</dbReference>
<dbReference type="SMART" id="SM00220">
    <property type="entry name" value="S_TKc"/>
    <property type="match status" value="1"/>
</dbReference>
<dbReference type="SUPFAM" id="SSF56112">
    <property type="entry name" value="Protein kinase-like (PK-like)"/>
    <property type="match status" value="1"/>
</dbReference>
<dbReference type="PROSITE" id="PS50011">
    <property type="entry name" value="PROTEIN_KINASE_DOM"/>
    <property type="match status" value="1"/>
</dbReference>
<dbReference type="PROSITE" id="PS00108">
    <property type="entry name" value="PROTEIN_KINASE_ST"/>
    <property type="match status" value="1"/>
</dbReference>
<sequence>MDGDGGRRDVPGTLMEPGRGAGPAGMAEPRAKAARPGPQRFLRRSVVESDQEEPPGLEAAEAPGPQPPQPLQRRVLLLCKTRRLIAERARGRPAAPAPAALVAQPGAPGAPADAGPEPVGTQEPGPDPIAAAVETAPAPDGGPREEAAATVRKEDEGAAEAKPEPGRTRRDEPEEEEDDEDDLKAVATSLDGRFLKFDIELGRGSFKTVYKGLDTETWVEVAWCELQDRKLTKLERQRFKEEAEMLKGLQHPNIVRFYDFWESSAKGKRCIVLVTELMTSGTLKTYLKRFKVMKPKVLRSWCRQILKGLLFLHTRTPPIIHRDLKCDNIFITGPTGSVKIGDLGLATLKRASFAKSVIGTPEFMAPEMYEEHYDESVDVYAFGMCMLEMATSEYPYSECQNAAQIYRKVTCGIKPASFEKVHDPEIKEIIGECICKNKEERYEIKDLLSHAFFAEDTGVRVELAEEDHGRKSTIALRLWVEDPKKLKGKPKDNGAIEFTFDLEKETPDEVAQEMIESGFFHESDVKIVAKSIRDRVALIQWRRERIWPALQPKEQQDVGSPDKARGPPVPLQVQVTYHAQAGQPGPPEPEEPEADQHLLPPTLPTSATSLASDSTFDSGQGSTVYSDSQSSQQSVMLGSLADAAPSPAQCVCSPPVSEGPVLPQSLPSLGAYQQPTAAPGLPVGSVPAPACPPSLQQHFPDPAMSFAPVLPPPSTPMPTGPGQPAPPGQQPPPLAQPTPLPQVLAPQPVVPLQPVPPHLPPYLAPASQVGAPAQLKPLQMPQAPLQPLAQVPPQMPPIPVVPPITPLAGIDGLPPALPDLPTATVPPVPPPQYFSPAVILPSLAAPLPPASPALPLQAVKLPHPPGAPLAMPCRTIVPNAPATIPLLAVAPPGVAALSIHSAVAQLPGQPVYPAAFPQMAPTDVPPSPHHTVQNMRATPPQPALPPQPTLPPQPVLPPQPTLPPQPVLPPQPTRPPQPVLPPQPMLPPQPVLPPQPALPVRPEPLQPHLPEQAAPAATPGSQILLGHPAPYAVDVAAQVPTVPVPPAAVLSPPLPEVLLPAAPELLPQFPSSLATVSASVQSVPTQTATLLPPANPPLPGGPGIASPCPTVQLTVEPVQEEQASQDKPPGLPQSCESYGGSDVTSGKELSDSCEGAFGGGRLEGRAARKHHRRSTRARSRQERASRPRLTILNVCNTGDKMVECQLETHNHKMVTFKFDLDGDAPDEIATYMVEHDFILQAERETFIEQMKDVMDKAEDMLSEDTDADRGSDPGTSPPHLSTCGLGTGEESRQSQANAPVYQQNVLHTGKRWFIICPVAEHPAPEAPESSPPLPLSSLPPEASQGPCRGLTLPCLPWRRAACGAVFLSLFSAESAQSKQPPDSAPYKDQLSSKEQPSFLASQQLLSQAGPSNPPGAPPAPLAPSSPPVTALPQDGAAPATSTMPEPASGTASQAGGPGTPQGLTSELETSQPLAETHEAPLAVQPLVVGLAPCTPAPEAASTRDASAPREPLPPPAPEPSPHSGTPQPALGQPAPLLPAAVGAVSLATSQLPSPPLGPTVPPQPPSALESDGEGPPPRVGFVDSTIKSLDEKLRTLLYQEHVPTSSASAGTPVEVGDRDFTLEPLRGDQPRSEVCGGDLALPPVPKEAVSGRVQLPQPLVEKSELAPTRGAVMEQGTSSSMTAESSPRSMLGYDRDGRQVASDSHVVPSVPQDVPAFVRPARVEPTDRDGGEAGESSAEPPPSDMGTVGGQASHPQTLGARALGSPRKRPEQQDVSSPAKTVGRFSVVSTQDEWTLASPHSLRYSAPPDVYLDEAPSSPDVKLAVRRAQTASSIEVGVGEPVSSDSGDEGPRARPPVQKQASLPVSGSVAGDFVKKATAFLQRPSRAGSLGPETPSRVGMKVPTISVTSFHSQSSYISSDNDSELEDADIKKELQSLREKHLKEISELQSQQKQEIEALYRRLGKPLPPNVGFFHTAPPTGRRRKTSKSKLKAGKLLNPLVRQLKVVASSTGHLADSSRGPPAKDPAQASVGLTADSTGLSGKAVQTQQPCSVRASLSSDICSGLASDGGGARGQGWTVYHPTSERVTYKSSSKPRARFLSGPVSVSIWSALKRLCLGKEHSSRSSTSSLAPGPEPGPQPALHVQAQVNNSNNKKGTFTDDLHKLVDEWTSKTVGAAQLKPTLNQLKQTQKLQDMEAQAGWAAPGEARAMTAPRAGVGMPRLPPAPGPLSTTVIPGAAPTLSVPTPDGALGTARRNQVWFGLRVPPTACCGHSTQPRGGQRVGSKTASFAASDPVRS</sequence>
<evidence type="ECO:0000250" key="1">
    <source>
        <dbReference type="UniProtKB" id="Q3UH66"/>
    </source>
</evidence>
<evidence type="ECO:0000250" key="2">
    <source>
        <dbReference type="UniProtKB" id="Q9H4A3"/>
    </source>
</evidence>
<evidence type="ECO:0000250" key="3">
    <source>
        <dbReference type="UniProtKB" id="Q9JIH7"/>
    </source>
</evidence>
<evidence type="ECO:0000255" key="4">
    <source>
        <dbReference type="PROSITE-ProRule" id="PRU00159"/>
    </source>
</evidence>
<evidence type="ECO:0000256" key="5">
    <source>
        <dbReference type="SAM" id="MobiDB-lite"/>
    </source>
</evidence>
<evidence type="ECO:0000269" key="6">
    <source>
    </source>
</evidence>
<evidence type="ECO:0000269" key="7">
    <source>
    </source>
</evidence>
<evidence type="ECO:0000269" key="8">
    <source>
    </source>
</evidence>
<evidence type="ECO:0000269" key="9">
    <source>
    </source>
</evidence>
<evidence type="ECO:0000269" key="10">
    <source>
    </source>
</evidence>
<evidence type="ECO:0000269" key="11">
    <source>
    </source>
</evidence>
<evidence type="ECO:0000303" key="12">
    <source>
    </source>
</evidence>
<evidence type="ECO:0000303" key="13">
    <source>
    </source>
</evidence>
<evidence type="ECO:0000303" key="14">
    <source>
    </source>
</evidence>
<evidence type="ECO:0000303" key="15">
    <source>
    </source>
</evidence>
<evidence type="ECO:0000305" key="16"/>
<evidence type="ECO:0000312" key="17">
    <source>
        <dbReference type="EMBL" id="BAB21851.2"/>
    </source>
</evidence>
<evidence type="ECO:0000312" key="18">
    <source>
        <dbReference type="HGNC" id="HGNC:14542"/>
    </source>
</evidence>
<evidence type="ECO:0007744" key="19">
    <source>
    </source>
</evidence>
<evidence type="ECO:0007744" key="20">
    <source>
    </source>
</evidence>
<evidence type="ECO:0007829" key="21">
    <source>
        <dbReference type="PDB" id="6ELM"/>
    </source>
</evidence>
<feature type="chain" id="PRO_0000086822" description="Serine/threonine-protein kinase WNK2">
    <location>
        <begin position="1"/>
        <end position="2297"/>
    </location>
</feature>
<feature type="domain" description="Protein kinase" evidence="4">
    <location>
        <begin position="195"/>
        <end position="453"/>
    </location>
</feature>
<feature type="region of interest" description="Disordered" evidence="5">
    <location>
        <begin position="1"/>
        <end position="75"/>
    </location>
</feature>
<feature type="region of interest" description="Disordered" evidence="5">
    <location>
        <begin position="89"/>
        <end position="183"/>
    </location>
</feature>
<feature type="region of interest" description="Disordered" evidence="5">
    <location>
        <begin position="579"/>
        <end position="630"/>
    </location>
</feature>
<feature type="region of interest" description="Disordered" evidence="5">
    <location>
        <begin position="699"/>
        <end position="751"/>
    </location>
</feature>
<feature type="region of interest" description="Disordered" evidence="5">
    <location>
        <begin position="917"/>
        <end position="1022"/>
    </location>
</feature>
<feature type="region of interest" description="Disordered" evidence="5">
    <location>
        <begin position="1117"/>
        <end position="1185"/>
    </location>
</feature>
<feature type="region of interest" description="Disordered" evidence="5">
    <location>
        <begin position="1262"/>
        <end position="1297"/>
    </location>
</feature>
<feature type="region of interest" description="Disordered" evidence="5">
    <location>
        <begin position="1323"/>
        <end position="1345"/>
    </location>
</feature>
<feature type="region of interest" description="Disordered" evidence="5">
    <location>
        <begin position="1374"/>
        <end position="1480"/>
    </location>
</feature>
<feature type="region of interest" description="Disordered" evidence="5">
    <location>
        <begin position="1492"/>
        <end position="1586"/>
    </location>
</feature>
<feature type="region of interest" description="Disordered" evidence="5">
    <location>
        <begin position="1621"/>
        <end position="1865"/>
    </location>
</feature>
<feature type="region of interest" description="Disordered" evidence="5">
    <location>
        <begin position="1970"/>
        <end position="1990"/>
    </location>
</feature>
<feature type="region of interest" description="Disordered" evidence="5">
    <location>
        <begin position="2011"/>
        <end position="2031"/>
    </location>
</feature>
<feature type="region of interest" description="Disordered" evidence="5">
    <location>
        <begin position="2123"/>
        <end position="2142"/>
    </location>
</feature>
<feature type="region of interest" description="Disordered" evidence="5">
    <location>
        <begin position="2269"/>
        <end position="2297"/>
    </location>
</feature>
<feature type="compositionally biased region" description="Basic and acidic residues" evidence="5">
    <location>
        <begin position="1"/>
        <end position="10"/>
    </location>
</feature>
<feature type="compositionally biased region" description="Low complexity" evidence="5">
    <location>
        <begin position="92"/>
        <end position="120"/>
    </location>
</feature>
<feature type="compositionally biased region" description="Basic and acidic residues" evidence="5">
    <location>
        <begin position="142"/>
        <end position="172"/>
    </location>
</feature>
<feature type="compositionally biased region" description="Acidic residues" evidence="5">
    <location>
        <begin position="173"/>
        <end position="182"/>
    </location>
</feature>
<feature type="compositionally biased region" description="Polar residues" evidence="5">
    <location>
        <begin position="604"/>
        <end position="625"/>
    </location>
</feature>
<feature type="compositionally biased region" description="Pro residues" evidence="5">
    <location>
        <begin position="709"/>
        <end position="740"/>
    </location>
</feature>
<feature type="compositionally biased region" description="Pro residues" evidence="5">
    <location>
        <begin position="939"/>
        <end position="1007"/>
    </location>
</feature>
<feature type="compositionally biased region" description="Basic residues" evidence="5">
    <location>
        <begin position="1167"/>
        <end position="1178"/>
    </location>
</feature>
<feature type="compositionally biased region" description="Polar residues" evidence="5">
    <location>
        <begin position="1392"/>
        <end position="1406"/>
    </location>
</feature>
<feature type="compositionally biased region" description="Pro residues" evidence="5">
    <location>
        <begin position="1411"/>
        <end position="1426"/>
    </location>
</feature>
<feature type="compositionally biased region" description="Polar residues" evidence="5">
    <location>
        <begin position="1439"/>
        <end position="1453"/>
    </location>
</feature>
<feature type="compositionally biased region" description="Polar residues" evidence="5">
    <location>
        <begin position="1461"/>
        <end position="1473"/>
    </location>
</feature>
<feature type="compositionally biased region" description="Pro residues" evidence="5">
    <location>
        <begin position="1510"/>
        <end position="1520"/>
    </location>
</feature>
<feature type="compositionally biased region" description="Low complexity" evidence="5">
    <location>
        <begin position="1526"/>
        <end position="1544"/>
    </location>
</feature>
<feature type="compositionally biased region" description="Pro residues" evidence="5">
    <location>
        <begin position="1552"/>
        <end position="1565"/>
    </location>
</feature>
<feature type="compositionally biased region" description="Basic and acidic residues" evidence="5">
    <location>
        <begin position="1621"/>
        <end position="1631"/>
    </location>
</feature>
<feature type="compositionally biased region" description="Polar residues" evidence="5">
    <location>
        <begin position="1675"/>
        <end position="1688"/>
    </location>
</feature>
<feature type="compositionally biased region" description="Basic and acidic residues" evidence="5">
    <location>
        <begin position="1721"/>
        <end position="1731"/>
    </location>
</feature>
<feature type="compositionally biased region" description="Basic residues" evidence="5">
    <location>
        <begin position="1981"/>
        <end position="1990"/>
    </location>
</feature>
<feature type="compositionally biased region" description="Polar residues" evidence="5">
    <location>
        <begin position="2272"/>
        <end position="2289"/>
    </location>
</feature>
<feature type="active site" description="Proton acceptor" evidence="3">
    <location>
        <position position="342"/>
    </location>
</feature>
<feature type="binding site" evidence="2">
    <location>
        <position position="205"/>
    </location>
    <ligand>
        <name>ATP</name>
        <dbReference type="ChEBI" id="CHEBI:30616"/>
    </ligand>
</feature>
<feature type="binding site" evidence="2">
    <location>
        <begin position="275"/>
        <end position="278"/>
    </location>
    <ligand>
        <name>ATP</name>
        <dbReference type="ChEBI" id="CHEBI:30616"/>
    </ligand>
</feature>
<feature type="binding site" evidence="2">
    <location>
        <position position="325"/>
    </location>
    <ligand>
        <name>ATP</name>
        <dbReference type="ChEBI" id="CHEBI:30616"/>
    </ligand>
</feature>
<feature type="modified residue" description="Omega-N-methylarginine" evidence="1">
    <location>
        <position position="19"/>
    </location>
</feature>
<feature type="modified residue" description="Omega-N-methylarginine" evidence="1">
    <location>
        <position position="30"/>
    </location>
</feature>
<feature type="modified residue" description="Phosphoserine" evidence="11">
    <location>
        <position position="45"/>
    </location>
</feature>
<feature type="modified residue" description="Phosphoserine; by autocatalysis" evidence="3">
    <location>
        <position position="352"/>
    </location>
</feature>
<feature type="modified residue" description="Phosphoserine; by autocatalysis" evidence="3">
    <location>
        <position position="356"/>
    </location>
</feature>
<feature type="modified residue" description="Phosphoserine" evidence="11">
    <location>
        <position position="560"/>
    </location>
</feature>
<feature type="modified residue" description="Phosphoserine" evidence="11">
    <location>
        <position position="1150"/>
    </location>
</feature>
<feature type="modified residue" description="Phosphoserine" evidence="11">
    <location>
        <position position="1262"/>
    </location>
</feature>
<feature type="modified residue" description="Phosphoserine" evidence="11">
    <location>
        <position position="1588"/>
    </location>
</feature>
<feature type="modified residue" description="Phosphoserine" evidence="11">
    <location>
        <position position="1685"/>
    </location>
</feature>
<feature type="modified residue" description="Phosphoserine" evidence="11">
    <location>
        <position position="1736"/>
    </location>
</feature>
<feature type="modified residue" description="Phosphoserine" evidence="11 19 20">
    <location>
        <position position="1817"/>
    </location>
</feature>
<feature type="modified residue" description="Phosphoserine" evidence="11 19 20">
    <location>
        <position position="1818"/>
    </location>
</feature>
<feature type="modified residue" description="Phosphoserine" evidence="11">
    <location>
        <position position="1862"/>
    </location>
</feature>
<feature type="modified residue" description="Phosphoserine" evidence="1">
    <location>
        <position position="1889"/>
    </location>
</feature>
<feature type="modified residue" description="Phosphoserine" evidence="11">
    <location>
        <position position="2067"/>
    </location>
</feature>
<feature type="splice variant" id="VSP_050639" description="In isoform 3." evidence="13">
    <location>
        <begin position="1"/>
        <end position="14"/>
    </location>
</feature>
<feature type="splice variant" id="VSP_050640" description="In isoform 3." evidence="13">
    <location>
        <begin position="680"/>
        <end position="731"/>
    </location>
</feature>
<feature type="splice variant" id="VSP_050641" description="In isoform 3." evidence="13">
    <original>LAA</original>
    <variation>RTR</variation>
    <location>
        <begin position="843"/>
        <end position="845"/>
    </location>
</feature>
<feature type="splice variant" id="VSP_050642" description="In isoform 3." evidence="13">
    <location>
        <begin position="846"/>
        <end position="2297"/>
    </location>
</feature>
<feature type="splice variant" id="VSP_050643" description="In isoform 2." evidence="12">
    <location>
        <begin position="1345"/>
        <end position="1381"/>
    </location>
</feature>
<feature type="splice variant" id="VSP_050644" description="In isoform 2." evidence="12">
    <original>DGALGTARRNQVWFG</original>
    <variation>GSCGPRAVSTPTSYT</variation>
    <location>
        <begin position="2247"/>
        <end position="2261"/>
    </location>
</feature>
<feature type="splice variant" id="VSP_050645" description="In isoform 4." evidence="15">
    <original>GALGTAR</original>
    <variation>PESEKPD</variation>
    <location>
        <begin position="2248"/>
        <end position="2254"/>
    </location>
</feature>
<feature type="splice variant" id="VSP_050646" description="In isoform 4." evidence="15">
    <location>
        <begin position="2255"/>
        <end position="2297"/>
    </location>
</feature>
<feature type="splice variant" id="VSP_050647" description="In isoform 2." evidence="12">
    <location>
        <begin position="2262"/>
        <end position="2297"/>
    </location>
</feature>
<feature type="sequence variant" id="VAR_057114" description="In dbSNP:rs10761203.">
    <original>V</original>
    <variation>M</variation>
    <location>
        <position position="828"/>
    </location>
</feature>
<feature type="sequence variant" id="VAR_059773" description="In dbSNP:rs10114908.">
    <original>R</original>
    <variation>L</variation>
    <location>
        <position position="974"/>
    </location>
</feature>
<feature type="strand" evidence="21">
    <location>
        <begin position="458"/>
        <end position="465"/>
    </location>
</feature>
<feature type="strand" evidence="21">
    <location>
        <begin position="469"/>
        <end position="481"/>
    </location>
</feature>
<feature type="helix" evidence="21">
    <location>
        <begin position="483"/>
        <end position="485"/>
    </location>
</feature>
<feature type="strand" evidence="21">
    <location>
        <begin position="496"/>
        <end position="501"/>
    </location>
</feature>
<feature type="turn" evidence="21">
    <location>
        <begin position="502"/>
        <end position="504"/>
    </location>
</feature>
<feature type="helix" evidence="21">
    <location>
        <begin position="507"/>
        <end position="516"/>
    </location>
</feature>
<feature type="helix" evidence="21">
    <location>
        <begin position="522"/>
        <end position="524"/>
    </location>
</feature>
<feature type="helix" evidence="21">
    <location>
        <begin position="525"/>
        <end position="545"/>
    </location>
</feature>